<sequence>MKFGKRIKEQIQESLPEWRDKFLRYKELKNLISSPAPVESIFVGLLNAEIDKFNAFFVEQEEDFIIHHKELQYRIQRLVEKCGHNDEMSRENISEIRKDIVNFHGEMVLLVNYSNINYTGLAKILKKYDKRTRGGLRSPFIQKVLHQPFFKTDLVSRLVREWETTMDAVDPVKVAEAEGYERCAAVTSAAAGEGIFRNTVAALLTMKEMRRGSSTYSAFSLPPLNISDSDNVLRSLHLSSPIPIP</sequence>
<organism>
    <name type="scientific">Arabidopsis thaliana</name>
    <name type="common">Mouse-ear cress</name>
    <dbReference type="NCBI Taxonomy" id="3702"/>
    <lineage>
        <taxon>Eukaryota</taxon>
        <taxon>Viridiplantae</taxon>
        <taxon>Streptophyta</taxon>
        <taxon>Embryophyta</taxon>
        <taxon>Tracheophyta</taxon>
        <taxon>Spermatophyta</taxon>
        <taxon>Magnoliopsida</taxon>
        <taxon>eudicotyledons</taxon>
        <taxon>Gunneridae</taxon>
        <taxon>Pentapetalae</taxon>
        <taxon>rosids</taxon>
        <taxon>malvids</taxon>
        <taxon>Brassicales</taxon>
        <taxon>Brassicaceae</taxon>
        <taxon>Camelineae</taxon>
        <taxon>Arabidopsis</taxon>
    </lineage>
</organism>
<reference key="1">
    <citation type="journal article" date="1999" name="Nature">
        <title>Sequence and analysis of chromosome 2 of the plant Arabidopsis thaliana.</title>
        <authorList>
            <person name="Lin X."/>
            <person name="Kaul S."/>
            <person name="Rounsley S.D."/>
            <person name="Shea T.P."/>
            <person name="Benito M.-I."/>
            <person name="Town C.D."/>
            <person name="Fujii C.Y."/>
            <person name="Mason T.M."/>
            <person name="Bowman C.L."/>
            <person name="Barnstead M.E."/>
            <person name="Feldblyum T.V."/>
            <person name="Buell C.R."/>
            <person name="Ketchum K.A."/>
            <person name="Lee J.J."/>
            <person name="Ronning C.M."/>
            <person name="Koo H.L."/>
            <person name="Moffat K.S."/>
            <person name="Cronin L.A."/>
            <person name="Shen M."/>
            <person name="Pai G."/>
            <person name="Van Aken S."/>
            <person name="Umayam L."/>
            <person name="Tallon L.J."/>
            <person name="Gill J.E."/>
            <person name="Adams M.D."/>
            <person name="Carrera A.J."/>
            <person name="Creasy T.H."/>
            <person name="Goodman H.M."/>
            <person name="Somerville C.R."/>
            <person name="Copenhaver G.P."/>
            <person name="Preuss D."/>
            <person name="Nierman W.C."/>
            <person name="White O."/>
            <person name="Eisen J.A."/>
            <person name="Salzberg S.L."/>
            <person name="Fraser C.M."/>
            <person name="Venter J.C."/>
        </authorList>
    </citation>
    <scope>NUCLEOTIDE SEQUENCE [LARGE SCALE GENOMIC DNA]</scope>
    <source>
        <strain>cv. Columbia</strain>
    </source>
</reference>
<reference key="2">
    <citation type="journal article" date="2017" name="Plant J.">
        <title>Araport11: a complete reannotation of the Arabidopsis thaliana reference genome.</title>
        <authorList>
            <person name="Cheng C.Y."/>
            <person name="Krishnakumar V."/>
            <person name="Chan A.P."/>
            <person name="Thibaud-Nissen F."/>
            <person name="Schobel S."/>
            <person name="Town C.D."/>
        </authorList>
    </citation>
    <scope>GENOME REANNOTATION</scope>
    <source>
        <strain>cv. Columbia</strain>
    </source>
</reference>
<reference key="3">
    <citation type="submission" date="2005-01" db="EMBL/GenBank/DDBJ databases">
        <title>Arabidopsis ORF clones.</title>
        <authorList>
            <person name="Kim C.J."/>
            <person name="Chen H."/>
            <person name="Cheuk R.F."/>
            <person name="Shinn P."/>
            <person name="Ecker J.R."/>
        </authorList>
    </citation>
    <scope>NUCLEOTIDE SEQUENCE [LARGE SCALE MRNA]</scope>
    <source>
        <strain>cv. Columbia</strain>
    </source>
</reference>
<reference key="4">
    <citation type="journal article" date="2008" name="Plant J.">
        <title>Characterization of a sub-family of Arabidopsis genes with the SPX domain reveals their diverse functions in plant tolerance to phosphorus starvation.</title>
        <authorList>
            <person name="Duan K."/>
            <person name="Yi K."/>
            <person name="Dang L."/>
            <person name="Huang H."/>
            <person name="Wu W."/>
            <person name="Wu P."/>
        </authorList>
    </citation>
    <scope>GENE FAMILY</scope>
    <scope>INDUCTION</scope>
    <scope>FUNCTION</scope>
</reference>
<protein>
    <recommendedName>
        <fullName>SPX domain-containing protein 3</fullName>
    </recommendedName>
    <alternativeName>
        <fullName>Protein SPX DOMAIN GENE 3</fullName>
        <shortName>AtSPX3</shortName>
    </alternativeName>
</protein>
<gene>
    <name type="primary">SPX3</name>
    <name type="ordered locus">At2g45130</name>
    <name type="ORF">T14P1.6</name>
</gene>
<comment type="function">
    <text evidence="2">Plays a positive role in plant adaptation to phosphate starvation and exerts negative feedback regulation of SPX1.</text>
</comment>
<comment type="induction">
    <text evidence="2">Up-regulated under phosphate starvation.</text>
</comment>
<name>SPX3_ARATH</name>
<keyword id="KW-1185">Reference proteome</keyword>
<feature type="chain" id="PRO_0000398344" description="SPX domain-containing protein 3">
    <location>
        <begin position="1"/>
        <end position="245"/>
    </location>
</feature>
<feature type="domain" description="SPX" evidence="1">
    <location>
        <begin position="1"/>
        <end position="142"/>
    </location>
</feature>
<accession>Q5PP62</accession>
<evidence type="ECO:0000255" key="1">
    <source>
        <dbReference type="PROSITE-ProRule" id="PRU00714"/>
    </source>
</evidence>
<evidence type="ECO:0000269" key="2">
    <source>
    </source>
</evidence>
<proteinExistence type="evidence at transcript level"/>
<dbReference type="EMBL" id="CP002685">
    <property type="protein sequence ID" value="AEC10511.1"/>
    <property type="molecule type" value="Genomic_DNA"/>
</dbReference>
<dbReference type="EMBL" id="BT020235">
    <property type="protein sequence ID" value="AAV74229.1"/>
    <property type="molecule type" value="mRNA"/>
</dbReference>
<dbReference type="EMBL" id="BT020499">
    <property type="protein sequence ID" value="AAW39000.1"/>
    <property type="molecule type" value="mRNA"/>
</dbReference>
<dbReference type="PIR" id="G84886">
    <property type="entry name" value="G84886"/>
</dbReference>
<dbReference type="RefSeq" id="NP_182038.1">
    <property type="nucleotide sequence ID" value="NM_130076.2"/>
</dbReference>
<dbReference type="SMR" id="Q5PP62"/>
<dbReference type="STRING" id="3702.Q5PP62"/>
<dbReference type="PaxDb" id="3702-AT2G45130.1"/>
<dbReference type="ProteomicsDB" id="245247"/>
<dbReference type="EnsemblPlants" id="AT2G45130.1">
    <property type="protein sequence ID" value="AT2G45130.1"/>
    <property type="gene ID" value="AT2G45130"/>
</dbReference>
<dbReference type="GeneID" id="819120"/>
<dbReference type="Gramene" id="AT2G45130.1">
    <property type="protein sequence ID" value="AT2G45130.1"/>
    <property type="gene ID" value="AT2G45130"/>
</dbReference>
<dbReference type="KEGG" id="ath:AT2G45130"/>
<dbReference type="Araport" id="AT2G45130"/>
<dbReference type="TAIR" id="AT2G45130">
    <property type="gene designation" value="SPX3"/>
</dbReference>
<dbReference type="eggNOG" id="KOG1161">
    <property type="taxonomic scope" value="Eukaryota"/>
</dbReference>
<dbReference type="HOGENOM" id="CLU_057600_1_1_1"/>
<dbReference type="InParanoid" id="Q5PP62"/>
<dbReference type="OMA" id="LAFVHFY"/>
<dbReference type="PhylomeDB" id="Q5PP62"/>
<dbReference type="PRO" id="PR:Q5PP62"/>
<dbReference type="Proteomes" id="UP000006548">
    <property type="component" value="Chromosome 2"/>
</dbReference>
<dbReference type="ExpressionAtlas" id="Q5PP62">
    <property type="expression patterns" value="baseline and differential"/>
</dbReference>
<dbReference type="GO" id="GO:0016036">
    <property type="term" value="P:cellular response to phosphate starvation"/>
    <property type="evidence" value="ECO:0000270"/>
    <property type="project" value="TAIR"/>
</dbReference>
<dbReference type="GO" id="GO:0080040">
    <property type="term" value="P:positive regulation of cellular response to phosphate starvation"/>
    <property type="evidence" value="ECO:0000315"/>
    <property type="project" value="TAIR"/>
</dbReference>
<dbReference type="CDD" id="cd14481">
    <property type="entry name" value="SPX_AtSPX1_like"/>
    <property type="match status" value="1"/>
</dbReference>
<dbReference type="InterPro" id="IPR004331">
    <property type="entry name" value="SPX_dom"/>
</dbReference>
<dbReference type="InterPro" id="IPR031142">
    <property type="entry name" value="SPX_prot"/>
</dbReference>
<dbReference type="PANTHER" id="PTHR45978">
    <property type="entry name" value="SPX DOMAIN-CONTAINING PROTEIN 3"/>
    <property type="match status" value="1"/>
</dbReference>
<dbReference type="PANTHER" id="PTHR45978:SF2">
    <property type="entry name" value="SPX DOMAIN-CONTAINING PROTEIN 3"/>
    <property type="match status" value="1"/>
</dbReference>
<dbReference type="Pfam" id="PF03105">
    <property type="entry name" value="SPX"/>
    <property type="match status" value="2"/>
</dbReference>
<dbReference type="PROSITE" id="PS51382">
    <property type="entry name" value="SPX"/>
    <property type="match status" value="1"/>
</dbReference>